<sequence>MLKLNLQFFASKKGVSSTKNGRDSESKRLGAKRADGQFVTGGSILFRQRGTKIYAGENVGRGGDDTLFAKIDGVVKFERKGRDKKQVSVYAVAE</sequence>
<reference key="1">
    <citation type="journal article" date="2009" name="Appl. Environ. Microbiol.">
        <title>Genome analysis of the meat starter culture bacterium Staphylococcus carnosus TM300.</title>
        <authorList>
            <person name="Rosenstein R."/>
            <person name="Nerz C."/>
            <person name="Biswas L."/>
            <person name="Resch A."/>
            <person name="Raddatz G."/>
            <person name="Schuster S.C."/>
            <person name="Goetz F."/>
        </authorList>
    </citation>
    <scope>NUCLEOTIDE SEQUENCE [LARGE SCALE GENOMIC DNA]</scope>
    <source>
        <strain>TM300</strain>
    </source>
</reference>
<accession>B9DNE8</accession>
<keyword id="KW-1185">Reference proteome</keyword>
<keyword id="KW-0687">Ribonucleoprotein</keyword>
<keyword id="KW-0689">Ribosomal protein</keyword>
<proteinExistence type="inferred from homology"/>
<name>RL27_STACT</name>
<protein>
    <recommendedName>
        <fullName evidence="2">Large ribosomal subunit protein bL27</fullName>
    </recommendedName>
    <alternativeName>
        <fullName evidence="4">50S ribosomal protein L27</fullName>
    </alternativeName>
</protein>
<evidence type="ECO:0000250" key="1">
    <source>
        <dbReference type="UniProtKB" id="Q2FXT0"/>
    </source>
</evidence>
<evidence type="ECO:0000255" key="2">
    <source>
        <dbReference type="HAMAP-Rule" id="MF_00539"/>
    </source>
</evidence>
<evidence type="ECO:0000256" key="3">
    <source>
        <dbReference type="SAM" id="MobiDB-lite"/>
    </source>
</evidence>
<evidence type="ECO:0000305" key="4"/>
<gene>
    <name evidence="2" type="primary">rpmA</name>
    <name type="ordered locus">Sca_1256</name>
</gene>
<dbReference type="EMBL" id="AM295250">
    <property type="protein sequence ID" value="CAL28163.1"/>
    <property type="molecule type" value="Genomic_DNA"/>
</dbReference>
<dbReference type="RefSeq" id="WP_015900503.1">
    <property type="nucleotide sequence ID" value="NC_012121.1"/>
</dbReference>
<dbReference type="SMR" id="B9DNE8"/>
<dbReference type="GeneID" id="93793682"/>
<dbReference type="KEGG" id="sca:SCA_1256"/>
<dbReference type="eggNOG" id="COG0211">
    <property type="taxonomic scope" value="Bacteria"/>
</dbReference>
<dbReference type="HOGENOM" id="CLU_095424_4_0_9"/>
<dbReference type="OrthoDB" id="9803474at2"/>
<dbReference type="BioCyc" id="SCAR396513:SCA_RS06280-MONOMER"/>
<dbReference type="Proteomes" id="UP000000444">
    <property type="component" value="Chromosome"/>
</dbReference>
<dbReference type="GO" id="GO:0022625">
    <property type="term" value="C:cytosolic large ribosomal subunit"/>
    <property type="evidence" value="ECO:0007669"/>
    <property type="project" value="TreeGrafter"/>
</dbReference>
<dbReference type="GO" id="GO:0003735">
    <property type="term" value="F:structural constituent of ribosome"/>
    <property type="evidence" value="ECO:0007669"/>
    <property type="project" value="InterPro"/>
</dbReference>
<dbReference type="GO" id="GO:0006412">
    <property type="term" value="P:translation"/>
    <property type="evidence" value="ECO:0007669"/>
    <property type="project" value="UniProtKB-UniRule"/>
</dbReference>
<dbReference type="FunFam" id="2.40.50.100:FF:000004">
    <property type="entry name" value="50S ribosomal protein L27"/>
    <property type="match status" value="1"/>
</dbReference>
<dbReference type="Gene3D" id="2.40.50.100">
    <property type="match status" value="1"/>
</dbReference>
<dbReference type="HAMAP" id="MF_00539">
    <property type="entry name" value="Ribosomal_bL27"/>
    <property type="match status" value="1"/>
</dbReference>
<dbReference type="InterPro" id="IPR001684">
    <property type="entry name" value="Ribosomal_bL27"/>
</dbReference>
<dbReference type="InterPro" id="IPR018261">
    <property type="entry name" value="Ribosomal_bL27_CS"/>
</dbReference>
<dbReference type="NCBIfam" id="TIGR00062">
    <property type="entry name" value="L27"/>
    <property type="match status" value="1"/>
</dbReference>
<dbReference type="PANTHER" id="PTHR15893:SF0">
    <property type="entry name" value="LARGE RIBOSOMAL SUBUNIT PROTEIN BL27M"/>
    <property type="match status" value="1"/>
</dbReference>
<dbReference type="PANTHER" id="PTHR15893">
    <property type="entry name" value="RIBOSOMAL PROTEIN L27"/>
    <property type="match status" value="1"/>
</dbReference>
<dbReference type="Pfam" id="PF01016">
    <property type="entry name" value="Ribosomal_L27"/>
    <property type="match status" value="1"/>
</dbReference>
<dbReference type="PRINTS" id="PR00063">
    <property type="entry name" value="RIBOSOMALL27"/>
</dbReference>
<dbReference type="SUPFAM" id="SSF110324">
    <property type="entry name" value="Ribosomal L27 protein-like"/>
    <property type="match status" value="1"/>
</dbReference>
<dbReference type="PROSITE" id="PS00831">
    <property type="entry name" value="RIBOSOMAL_L27"/>
    <property type="match status" value="1"/>
</dbReference>
<feature type="propeptide" id="PRO_0000459940" evidence="1">
    <location>
        <begin position="1"/>
        <end position="9"/>
    </location>
</feature>
<feature type="chain" id="PRO_1000195886" description="Large ribosomal subunit protein bL27">
    <location>
        <begin position="10"/>
        <end position="94"/>
    </location>
</feature>
<feature type="region of interest" description="Disordered" evidence="3">
    <location>
        <begin position="12"/>
        <end position="32"/>
    </location>
</feature>
<feature type="compositionally biased region" description="Basic and acidic residues" evidence="3">
    <location>
        <begin position="20"/>
        <end position="32"/>
    </location>
</feature>
<comment type="PTM">
    <text evidence="1">The N-terminus is cleaved by ribosomal processing cysteine protease Prp.</text>
</comment>
<comment type="similarity">
    <text evidence="2">Belongs to the bacterial ribosomal protein bL27 family.</text>
</comment>
<organism>
    <name type="scientific">Staphylococcus carnosus (strain TM300)</name>
    <dbReference type="NCBI Taxonomy" id="396513"/>
    <lineage>
        <taxon>Bacteria</taxon>
        <taxon>Bacillati</taxon>
        <taxon>Bacillota</taxon>
        <taxon>Bacilli</taxon>
        <taxon>Bacillales</taxon>
        <taxon>Staphylococcaceae</taxon>
        <taxon>Staphylococcus</taxon>
    </lineage>
</organism>